<protein>
    <recommendedName>
        <fullName evidence="1">Putative pre-16S rRNA nuclease</fullName>
        <ecNumber evidence="1">3.1.-.-</ecNumber>
    </recommendedName>
</protein>
<gene>
    <name type="ordered locus">BCE_4469</name>
</gene>
<accession>Q730E7</accession>
<comment type="function">
    <text evidence="1">Could be a nuclease involved in processing of the 5'-end of pre-16S rRNA.</text>
</comment>
<comment type="subcellular location">
    <subcellularLocation>
        <location evidence="1">Cytoplasm</location>
    </subcellularLocation>
</comment>
<comment type="similarity">
    <text evidence="1">Belongs to the YqgF nuclease family.</text>
</comment>
<feature type="chain" id="PRO_0000172015" description="Putative pre-16S rRNA nuclease">
    <location>
        <begin position="1"/>
        <end position="137"/>
    </location>
</feature>
<dbReference type="EC" id="3.1.-.-" evidence="1"/>
<dbReference type="EMBL" id="AE017194">
    <property type="protein sequence ID" value="AAS43370.1"/>
    <property type="molecule type" value="Genomic_DNA"/>
</dbReference>
<dbReference type="SMR" id="Q730E7"/>
<dbReference type="KEGG" id="bca:BCE_4469"/>
<dbReference type="HOGENOM" id="CLU_098240_2_0_9"/>
<dbReference type="Proteomes" id="UP000002527">
    <property type="component" value="Chromosome"/>
</dbReference>
<dbReference type="GO" id="GO:0005829">
    <property type="term" value="C:cytosol"/>
    <property type="evidence" value="ECO:0007669"/>
    <property type="project" value="TreeGrafter"/>
</dbReference>
<dbReference type="GO" id="GO:0004518">
    <property type="term" value="F:nuclease activity"/>
    <property type="evidence" value="ECO:0007669"/>
    <property type="project" value="UniProtKB-KW"/>
</dbReference>
<dbReference type="GO" id="GO:0000967">
    <property type="term" value="P:rRNA 5'-end processing"/>
    <property type="evidence" value="ECO:0007669"/>
    <property type="project" value="UniProtKB-UniRule"/>
</dbReference>
<dbReference type="CDD" id="cd16964">
    <property type="entry name" value="YqgF"/>
    <property type="match status" value="1"/>
</dbReference>
<dbReference type="FunFam" id="3.30.420.140:FF:000003">
    <property type="entry name" value="Putative pre-16S rRNA nuclease"/>
    <property type="match status" value="1"/>
</dbReference>
<dbReference type="Gene3D" id="3.30.420.140">
    <property type="entry name" value="YqgF/RNase H-like domain"/>
    <property type="match status" value="1"/>
</dbReference>
<dbReference type="HAMAP" id="MF_00651">
    <property type="entry name" value="Nuclease_YqgF"/>
    <property type="match status" value="1"/>
</dbReference>
<dbReference type="InterPro" id="IPR012337">
    <property type="entry name" value="RNaseH-like_sf"/>
</dbReference>
<dbReference type="InterPro" id="IPR005227">
    <property type="entry name" value="YqgF"/>
</dbReference>
<dbReference type="InterPro" id="IPR006641">
    <property type="entry name" value="YqgF/RNaseH-like_dom"/>
</dbReference>
<dbReference type="InterPro" id="IPR037027">
    <property type="entry name" value="YqgF/RNaseH-like_dom_sf"/>
</dbReference>
<dbReference type="NCBIfam" id="TIGR00250">
    <property type="entry name" value="RNAse_H_YqgF"/>
    <property type="match status" value="1"/>
</dbReference>
<dbReference type="PANTHER" id="PTHR33317">
    <property type="entry name" value="POLYNUCLEOTIDYL TRANSFERASE, RIBONUCLEASE H-LIKE SUPERFAMILY PROTEIN"/>
    <property type="match status" value="1"/>
</dbReference>
<dbReference type="PANTHER" id="PTHR33317:SF4">
    <property type="entry name" value="POLYNUCLEOTIDYL TRANSFERASE, RIBONUCLEASE H-LIKE SUPERFAMILY PROTEIN"/>
    <property type="match status" value="1"/>
</dbReference>
<dbReference type="Pfam" id="PF03652">
    <property type="entry name" value="RuvX"/>
    <property type="match status" value="1"/>
</dbReference>
<dbReference type="SMART" id="SM00732">
    <property type="entry name" value="YqgFc"/>
    <property type="match status" value="1"/>
</dbReference>
<dbReference type="SUPFAM" id="SSF53098">
    <property type="entry name" value="Ribonuclease H-like"/>
    <property type="match status" value="1"/>
</dbReference>
<proteinExistence type="inferred from homology"/>
<reference key="1">
    <citation type="journal article" date="2004" name="Nucleic Acids Res.">
        <title>The genome sequence of Bacillus cereus ATCC 10987 reveals metabolic adaptations and a large plasmid related to Bacillus anthracis pXO1.</title>
        <authorList>
            <person name="Rasko D.A."/>
            <person name="Ravel J."/>
            <person name="Oekstad O.A."/>
            <person name="Helgason E."/>
            <person name="Cer R.Z."/>
            <person name="Jiang L."/>
            <person name="Shores K.A."/>
            <person name="Fouts D.E."/>
            <person name="Tourasse N.J."/>
            <person name="Angiuoli S.V."/>
            <person name="Kolonay J.F."/>
            <person name="Nelson W.C."/>
            <person name="Kolstoe A.-B."/>
            <person name="Fraser C.M."/>
            <person name="Read T.D."/>
        </authorList>
    </citation>
    <scope>NUCLEOTIDE SEQUENCE [LARGE SCALE GENOMIC DNA]</scope>
    <source>
        <strain>ATCC 10987 / NRS 248</strain>
    </source>
</reference>
<name>YQGF_BACC1</name>
<keyword id="KW-0963">Cytoplasm</keyword>
<keyword id="KW-0378">Hydrolase</keyword>
<keyword id="KW-0540">Nuclease</keyword>
<keyword id="KW-0690">Ribosome biogenesis</keyword>
<evidence type="ECO:0000255" key="1">
    <source>
        <dbReference type="HAMAP-Rule" id="MF_00651"/>
    </source>
</evidence>
<sequence>MRILGLDVGTKTVGVAISDEMGWTAQGLETIKINEERGQFGFDRISELVKQYDVDKIVVGLPKNMNGTIGPRGEACQQFAENLRELLQLDVVMWDERLSTMAAERLLISADVSRKKRKQVIDKMAAVVILQGFLDSK</sequence>
<organism>
    <name type="scientific">Bacillus cereus (strain ATCC 10987 / NRS 248)</name>
    <dbReference type="NCBI Taxonomy" id="222523"/>
    <lineage>
        <taxon>Bacteria</taxon>
        <taxon>Bacillati</taxon>
        <taxon>Bacillota</taxon>
        <taxon>Bacilli</taxon>
        <taxon>Bacillales</taxon>
        <taxon>Bacillaceae</taxon>
        <taxon>Bacillus</taxon>
        <taxon>Bacillus cereus group</taxon>
    </lineage>
</organism>